<organism>
    <name type="scientific">Yersinia enterocolitica serotype O:8 / biotype 1B (strain NCTC 13174 / 8081)</name>
    <dbReference type="NCBI Taxonomy" id="393305"/>
    <lineage>
        <taxon>Bacteria</taxon>
        <taxon>Pseudomonadati</taxon>
        <taxon>Pseudomonadota</taxon>
        <taxon>Gammaproteobacteria</taxon>
        <taxon>Enterobacterales</taxon>
        <taxon>Yersiniaceae</taxon>
        <taxon>Yersinia</taxon>
    </lineage>
</organism>
<sequence length="141" mass="16247">MEIRVFQQSDFEEVILLWEHCDLLRPWNDPEMDIERKLNHDPELFLVAEVSGAIVGSVMGGYDGHRGSAYYLGVHPDFRGRGFANALISRLEKKLIARGCPKLNIMVREDNDAVIGMYEKLDYETQDTIMLGKRLIVDQEY</sequence>
<name>Y1169_YERE8</name>
<protein>
    <recommendedName>
        <fullName evidence="1">Acetyltransferase YE1169</fullName>
        <ecNumber evidence="1">2.3.1.-</ecNumber>
    </recommendedName>
</protein>
<reference key="1">
    <citation type="journal article" date="2006" name="PLoS Genet.">
        <title>The complete genome sequence and comparative genome analysis of the high pathogenicity Yersinia enterocolitica strain 8081.</title>
        <authorList>
            <person name="Thomson N.R."/>
            <person name="Howard S."/>
            <person name="Wren B.W."/>
            <person name="Holden M.T.G."/>
            <person name="Crossman L."/>
            <person name="Challis G.L."/>
            <person name="Churcher C."/>
            <person name="Mungall K."/>
            <person name="Brooks K."/>
            <person name="Chillingworth T."/>
            <person name="Feltwell T."/>
            <person name="Abdellah Z."/>
            <person name="Hauser H."/>
            <person name="Jagels K."/>
            <person name="Maddison M."/>
            <person name="Moule S."/>
            <person name="Sanders M."/>
            <person name="Whitehead S."/>
            <person name="Quail M.A."/>
            <person name="Dougan G."/>
            <person name="Parkhill J."/>
            <person name="Prentice M.B."/>
        </authorList>
    </citation>
    <scope>NUCLEOTIDE SEQUENCE [LARGE SCALE GENOMIC DNA]</scope>
    <source>
        <strain>NCTC 13174 / 8081</strain>
    </source>
</reference>
<feature type="chain" id="PRO_0000298450" description="Acetyltransferase YE1169">
    <location>
        <begin position="1"/>
        <end position="141"/>
    </location>
</feature>
<feature type="domain" description="N-acetyltransferase" evidence="1">
    <location>
        <begin position="1"/>
        <end position="141"/>
    </location>
</feature>
<evidence type="ECO:0000255" key="1">
    <source>
        <dbReference type="HAMAP-Rule" id="MF_01127"/>
    </source>
</evidence>
<proteinExistence type="inferred from homology"/>
<dbReference type="EC" id="2.3.1.-" evidence="1"/>
<dbReference type="EMBL" id="AM286415">
    <property type="protein sequence ID" value="CAL11262.1"/>
    <property type="molecule type" value="Genomic_DNA"/>
</dbReference>
<dbReference type="RefSeq" id="WP_005172297.1">
    <property type="nucleotide sequence ID" value="NC_008800.1"/>
</dbReference>
<dbReference type="RefSeq" id="YP_001005495.1">
    <property type="nucleotide sequence ID" value="NC_008800.1"/>
</dbReference>
<dbReference type="SMR" id="A1JL38"/>
<dbReference type="KEGG" id="yen:YE1169"/>
<dbReference type="PATRIC" id="fig|393305.7.peg.1274"/>
<dbReference type="eggNOG" id="COG0456">
    <property type="taxonomic scope" value="Bacteria"/>
</dbReference>
<dbReference type="HOGENOM" id="CLU_013985_34_1_6"/>
<dbReference type="OrthoDB" id="1821130at2"/>
<dbReference type="Proteomes" id="UP000000642">
    <property type="component" value="Chromosome"/>
</dbReference>
<dbReference type="GO" id="GO:0016747">
    <property type="term" value="F:acyltransferase activity, transferring groups other than amino-acyl groups"/>
    <property type="evidence" value="ECO:0007669"/>
    <property type="project" value="UniProtKB-UniRule"/>
</dbReference>
<dbReference type="CDD" id="cd04301">
    <property type="entry name" value="NAT_SF"/>
    <property type="match status" value="1"/>
</dbReference>
<dbReference type="Gene3D" id="3.40.630.30">
    <property type="match status" value="1"/>
</dbReference>
<dbReference type="HAMAP" id="MF_01127">
    <property type="entry name" value="Acetyltransf_YpeA"/>
    <property type="match status" value="1"/>
</dbReference>
<dbReference type="InterPro" id="IPR023072">
    <property type="entry name" value="Acetyltransferase_YpeA"/>
</dbReference>
<dbReference type="InterPro" id="IPR016181">
    <property type="entry name" value="Acyl_CoA_acyltransferase"/>
</dbReference>
<dbReference type="InterPro" id="IPR000182">
    <property type="entry name" value="GNAT_dom"/>
</dbReference>
<dbReference type="NCBIfam" id="NF002959">
    <property type="entry name" value="PRK03624.1"/>
    <property type="match status" value="1"/>
</dbReference>
<dbReference type="PANTHER" id="PTHR43072:SF51">
    <property type="entry name" value="ABC SUPERFAMILY TRANSPORT PROTEIN"/>
    <property type="match status" value="1"/>
</dbReference>
<dbReference type="PANTHER" id="PTHR43072">
    <property type="entry name" value="N-ACETYLTRANSFERASE"/>
    <property type="match status" value="1"/>
</dbReference>
<dbReference type="Pfam" id="PF00583">
    <property type="entry name" value="Acetyltransf_1"/>
    <property type="match status" value="1"/>
</dbReference>
<dbReference type="SUPFAM" id="SSF55729">
    <property type="entry name" value="Acyl-CoA N-acyltransferases (Nat)"/>
    <property type="match status" value="1"/>
</dbReference>
<dbReference type="PROSITE" id="PS51186">
    <property type="entry name" value="GNAT"/>
    <property type="match status" value="1"/>
</dbReference>
<comment type="similarity">
    <text evidence="1">Belongs to the acetyltransferase family. YpeA subfamily.</text>
</comment>
<accession>A1JL38</accession>
<gene>
    <name type="ordered locus">YE1169</name>
</gene>
<keyword id="KW-0012">Acyltransferase</keyword>
<keyword id="KW-0808">Transferase</keyword>